<protein>
    <recommendedName>
        <fullName>E3 ubiquitin-protein ligase Rnf220</fullName>
        <ecNumber>2.3.2.27</ecNumber>
    </recommendedName>
    <alternativeName>
        <fullName>RING finger protein 220</fullName>
    </alternativeName>
    <alternativeName>
        <fullName evidence="10">RING-type E3 ubiquitin transferase Rnf220</fullName>
    </alternativeName>
</protein>
<evidence type="ECO:0000250" key="1"/>
<evidence type="ECO:0000250" key="2">
    <source>
        <dbReference type="UniProtKB" id="Q5VTB9"/>
    </source>
</evidence>
<evidence type="ECO:0000255" key="3"/>
<evidence type="ECO:0000255" key="4">
    <source>
        <dbReference type="PROSITE-ProRule" id="PRU00175"/>
    </source>
</evidence>
<evidence type="ECO:0000256" key="5">
    <source>
        <dbReference type="SAM" id="MobiDB-lite"/>
    </source>
</evidence>
<evidence type="ECO:0000269" key="6">
    <source>
    </source>
</evidence>
<evidence type="ECO:0000269" key="7">
    <source>
    </source>
</evidence>
<evidence type="ECO:0000303" key="8">
    <source>
    </source>
</evidence>
<evidence type="ECO:0000303" key="9">
    <source>
    </source>
</evidence>
<evidence type="ECO:0000305" key="10"/>
<evidence type="ECO:0007744" key="11">
    <source>
    </source>
</evidence>
<comment type="function">
    <text evidence="2 6">E3 ubiquitin-protein ligase that promotes the ubiquitination and proteasomal degradation of SIN3B (PubMed:20170641). Independently of its E3 ligase activity, acts as a CTNNB1 stabilizer through USP7-mediated deubiquitination of CTNNB1 and promotes Wnt signaling (By similarity). Plays a critical role in the regulation of nuclear lamina.</text>
</comment>
<comment type="catalytic activity">
    <reaction>
        <text>S-ubiquitinyl-[E2 ubiquitin-conjugating enzyme]-L-cysteine + [acceptor protein]-L-lysine = [E2 ubiquitin-conjugating enzyme]-L-cysteine + N(6)-ubiquitinyl-[acceptor protein]-L-lysine.</text>
        <dbReference type="EC" id="2.3.2.27"/>
    </reaction>
</comment>
<comment type="pathway">
    <text>Protein modification; protein ubiquitination.</text>
</comment>
<comment type="subunit">
    <text evidence="2 6">Interacts with SIN3B (PubMed:20170641). Interacts with CTNNB1 (via Armadillo repeats 2-8) (By similarity). Interacts with USP7 (via MATH domain) (By similarity).</text>
</comment>
<comment type="interaction">
    <interactant intactId="EBI-2795840">
        <id>Q6PDX6</id>
    </interactant>
    <interactant intactId="EBI-591450">
        <id>Q62141</id>
        <label>Sin3b</label>
    </interactant>
    <organismsDiffer>false</organismsDiffer>
    <experiments>5</experiments>
</comment>
<comment type="subcellular location">
    <subcellularLocation>
        <location evidence="6">Cytoplasm</location>
    </subcellularLocation>
    <subcellularLocation>
        <location evidence="2">Nucleus</location>
    </subcellularLocation>
</comment>
<comment type="alternative products">
    <event type="alternative splicing"/>
    <isoform>
        <id>Q6PDX6-1</id>
        <name>1</name>
        <sequence type="displayed"/>
    </isoform>
    <isoform>
        <id>Q6PDX6-2</id>
        <name>2</name>
        <sequence type="described" ref="VSP_023069 VSP_023072 VSP_023073"/>
    </isoform>
    <isoform>
        <id>Q6PDX6-3</id>
        <name>3</name>
        <sequence type="described" ref="VSP_023070 VSP_023071"/>
    </isoform>
    <isoform>
        <id>Q6PDX6-4</id>
        <name>4</name>
        <sequence type="described" ref="VSP_023068"/>
    </isoform>
</comment>
<comment type="tissue specificity">
    <text evidence="7">In the brain, expressed in the hippocampus, telenecephalon and cerebellum. No expression in astro glial cells or in neural progenitor cells.</text>
</comment>
<comment type="PTM">
    <text evidence="1">Auto-ubiquitinated; leads to proteasomal degradation.</text>
</comment>
<accession>Q6PDX6</accession>
<accession>A2APP0</accession>
<accession>Q3T9M4</accession>
<accession>Q3V3D7</accession>
<accession>Q8JZY5</accession>
<proteinExistence type="evidence at protein level"/>
<dbReference type="EC" id="2.3.2.27"/>
<dbReference type="EMBL" id="AK041785">
    <property type="protein sequence ID" value="BAE20604.1"/>
    <property type="molecule type" value="mRNA"/>
</dbReference>
<dbReference type="EMBL" id="AK172415">
    <property type="protein sequence ID" value="BAE42996.1"/>
    <property type="molecule type" value="mRNA"/>
</dbReference>
<dbReference type="EMBL" id="AL645740">
    <property type="status" value="NOT_ANNOTATED_CDS"/>
    <property type="molecule type" value="Genomic_DNA"/>
</dbReference>
<dbReference type="EMBL" id="AL844169">
    <property type="status" value="NOT_ANNOTATED_CDS"/>
    <property type="molecule type" value="Genomic_DNA"/>
</dbReference>
<dbReference type="EMBL" id="BC034875">
    <property type="protein sequence ID" value="AAH34875.1"/>
    <property type="molecule type" value="mRNA"/>
</dbReference>
<dbReference type="EMBL" id="BC056359">
    <property type="protein sequence ID" value="AAH56359.1"/>
    <property type="molecule type" value="mRNA"/>
</dbReference>
<dbReference type="EMBL" id="BC058415">
    <property type="protein sequence ID" value="AAH58415.1"/>
    <property type="molecule type" value="mRNA"/>
</dbReference>
<dbReference type="CCDS" id="CCDS18534.1">
    <molecule id="Q6PDX6-1"/>
</dbReference>
<dbReference type="CCDS" id="CCDS80149.1">
    <molecule id="Q6PDX6-4"/>
</dbReference>
<dbReference type="CCDS" id="CCDS89815.1">
    <molecule id="Q6PDX6-2"/>
</dbReference>
<dbReference type="RefSeq" id="NP_001297658.1">
    <property type="nucleotide sequence ID" value="NM_001310729.1"/>
</dbReference>
<dbReference type="RefSeq" id="NP_001297659.1">
    <molecule id="Q6PDX6-2"/>
    <property type="nucleotide sequence ID" value="NM_001310730.1"/>
</dbReference>
<dbReference type="RefSeq" id="NP_001297660.1">
    <molecule id="Q6PDX6-4"/>
    <property type="nucleotide sequence ID" value="NM_001310731.1"/>
</dbReference>
<dbReference type="RefSeq" id="NP_080015.3">
    <molecule id="Q6PDX6-1"/>
    <property type="nucleotide sequence ID" value="NM_025739.3"/>
</dbReference>
<dbReference type="RefSeq" id="XP_011238891.1">
    <molecule id="Q6PDX6-4"/>
    <property type="nucleotide sequence ID" value="XM_011240589.4"/>
</dbReference>
<dbReference type="RefSeq" id="XP_017175844.1">
    <property type="nucleotide sequence ID" value="XM_017320355.1"/>
</dbReference>
<dbReference type="RefSeq" id="XP_017175846.1">
    <molecule id="Q6PDX6-4"/>
    <property type="nucleotide sequence ID" value="XM_017320357.3"/>
</dbReference>
<dbReference type="RefSeq" id="XP_030109563.1">
    <molecule id="Q6PDX6-4"/>
    <property type="nucleotide sequence ID" value="XM_030253703.2"/>
</dbReference>
<dbReference type="RefSeq" id="XP_030109564.1">
    <molecule id="Q6PDX6-4"/>
    <property type="nucleotide sequence ID" value="XM_030253704.2"/>
</dbReference>
<dbReference type="RefSeq" id="XP_036020239.1">
    <molecule id="Q6PDX6-1"/>
    <property type="nucleotide sequence ID" value="XM_036164346.1"/>
</dbReference>
<dbReference type="RefSeq" id="XP_036020240.1">
    <molecule id="Q6PDX6-1"/>
    <property type="nucleotide sequence ID" value="XM_036164347.1"/>
</dbReference>
<dbReference type="RefSeq" id="XP_036020241.1">
    <molecule id="Q6PDX6-1"/>
    <property type="nucleotide sequence ID" value="XM_036164348.1"/>
</dbReference>
<dbReference type="RefSeq" id="XP_036020242.1">
    <molecule id="Q6PDX6-1"/>
    <property type="nucleotide sequence ID" value="XM_036164349.1"/>
</dbReference>
<dbReference type="RefSeq" id="XP_036020243.1">
    <molecule id="Q6PDX6-1"/>
    <property type="nucleotide sequence ID" value="XM_036164350.1"/>
</dbReference>
<dbReference type="BioGRID" id="211685">
    <property type="interactions" value="7"/>
</dbReference>
<dbReference type="FunCoup" id="Q6PDX6">
    <property type="interactions" value="3704"/>
</dbReference>
<dbReference type="IntAct" id="Q6PDX6">
    <property type="interactions" value="6"/>
</dbReference>
<dbReference type="STRING" id="10090.ENSMUSP00000030439"/>
<dbReference type="GlyGen" id="Q6PDX6">
    <property type="glycosylation" value="1 site, 1 O-linked glycan (1 site)"/>
</dbReference>
<dbReference type="iPTMnet" id="Q6PDX6"/>
<dbReference type="PhosphoSitePlus" id="Q6PDX6"/>
<dbReference type="SwissPalm" id="Q6PDX6"/>
<dbReference type="PaxDb" id="10090-ENSMUSP00000030439"/>
<dbReference type="PeptideAtlas" id="Q6PDX6"/>
<dbReference type="ProteomicsDB" id="300547">
    <molecule id="Q6PDX6-1"/>
</dbReference>
<dbReference type="ProteomicsDB" id="300548">
    <molecule id="Q6PDX6-2"/>
</dbReference>
<dbReference type="ProteomicsDB" id="300549">
    <molecule id="Q6PDX6-3"/>
</dbReference>
<dbReference type="ProteomicsDB" id="300550">
    <molecule id="Q6PDX6-4"/>
</dbReference>
<dbReference type="Pumba" id="Q6PDX6"/>
<dbReference type="Antibodypedia" id="32475">
    <property type="antibodies" value="59 antibodies from 15 providers"/>
</dbReference>
<dbReference type="DNASU" id="66743"/>
<dbReference type="Ensembl" id="ENSMUST00000030439.15">
    <molecule id="Q6PDX6-1"/>
    <property type="protein sequence ID" value="ENSMUSP00000030439.9"/>
    <property type="gene ID" value="ENSMUSG00000028677.20"/>
</dbReference>
<dbReference type="Ensembl" id="ENSMUST00000102690.9">
    <molecule id="Q6PDX6-4"/>
    <property type="protein sequence ID" value="ENSMUSP00000099751.3"/>
    <property type="gene ID" value="ENSMUSG00000028677.20"/>
</dbReference>
<dbReference type="Ensembl" id="ENSMUST00000221654.2">
    <molecule id="Q6PDX6-2"/>
    <property type="protein sequence ID" value="ENSMUSP00000152367.2"/>
    <property type="gene ID" value="ENSMUSG00000028677.20"/>
</dbReference>
<dbReference type="GeneID" id="66743"/>
<dbReference type="KEGG" id="mmu:66743"/>
<dbReference type="UCSC" id="uc008uim.1">
    <molecule id="Q6PDX6-4"/>
    <property type="organism name" value="mouse"/>
</dbReference>
<dbReference type="UCSC" id="uc008uin.1">
    <molecule id="Q6PDX6-2"/>
    <property type="organism name" value="mouse"/>
</dbReference>
<dbReference type="UCSC" id="uc008uip.1">
    <molecule id="Q6PDX6-1"/>
    <property type="organism name" value="mouse"/>
</dbReference>
<dbReference type="UCSC" id="uc008uiq.1">
    <molecule id="Q6PDX6-3"/>
    <property type="organism name" value="mouse"/>
</dbReference>
<dbReference type="AGR" id="MGI:1913993"/>
<dbReference type="CTD" id="55182"/>
<dbReference type="MGI" id="MGI:1913993">
    <property type="gene designation" value="Rnf220"/>
</dbReference>
<dbReference type="VEuPathDB" id="HostDB:ENSMUSG00000028677"/>
<dbReference type="eggNOG" id="ENOG502QR1N">
    <property type="taxonomic scope" value="Eukaryota"/>
</dbReference>
<dbReference type="GeneTree" id="ENSGT00390000016573"/>
<dbReference type="HOGENOM" id="CLU_035321_0_0_1"/>
<dbReference type="InParanoid" id="Q6PDX6"/>
<dbReference type="OrthoDB" id="6270329at2759"/>
<dbReference type="PhylomeDB" id="Q6PDX6"/>
<dbReference type="TreeFam" id="TF324716"/>
<dbReference type="BRENDA" id="2.3.2.27">
    <property type="organism ID" value="3474"/>
</dbReference>
<dbReference type="Reactome" id="R-MMU-983168">
    <property type="pathway name" value="Antigen processing: Ubiquitination &amp; Proteasome degradation"/>
</dbReference>
<dbReference type="UniPathway" id="UPA00143"/>
<dbReference type="BioGRID-ORCS" id="66743">
    <property type="hits" value="4 hits in 77 CRISPR screens"/>
</dbReference>
<dbReference type="ChiTaRS" id="Rnf220">
    <property type="organism name" value="mouse"/>
</dbReference>
<dbReference type="PRO" id="PR:Q6PDX6"/>
<dbReference type="Proteomes" id="UP000000589">
    <property type="component" value="Chromosome 4"/>
</dbReference>
<dbReference type="RNAct" id="Q6PDX6">
    <property type="molecule type" value="protein"/>
</dbReference>
<dbReference type="Bgee" id="ENSMUSG00000028677">
    <property type="expression patterns" value="Expressed in embryonic post-anal tail and 261 other cell types or tissues"/>
</dbReference>
<dbReference type="ExpressionAtlas" id="Q6PDX6">
    <property type="expression patterns" value="baseline and differential"/>
</dbReference>
<dbReference type="GO" id="GO:0005737">
    <property type="term" value="C:cytoplasm"/>
    <property type="evidence" value="ECO:0000314"/>
    <property type="project" value="UniProtKB"/>
</dbReference>
<dbReference type="GO" id="GO:0098978">
    <property type="term" value="C:glutamatergic synapse"/>
    <property type="evidence" value="ECO:0000314"/>
    <property type="project" value="SynGO"/>
</dbReference>
<dbReference type="GO" id="GO:0005652">
    <property type="term" value="C:nuclear lamina"/>
    <property type="evidence" value="ECO:0000250"/>
    <property type="project" value="UniProtKB"/>
</dbReference>
<dbReference type="GO" id="GO:0005654">
    <property type="term" value="C:nucleoplasm"/>
    <property type="evidence" value="ECO:0007669"/>
    <property type="project" value="Ensembl"/>
</dbReference>
<dbReference type="GO" id="GO:0005634">
    <property type="term" value="C:nucleus"/>
    <property type="evidence" value="ECO:0000250"/>
    <property type="project" value="UniProtKB"/>
</dbReference>
<dbReference type="GO" id="GO:0098794">
    <property type="term" value="C:postsynapse"/>
    <property type="evidence" value="ECO:0000314"/>
    <property type="project" value="SynGO"/>
</dbReference>
<dbReference type="GO" id="GO:0032991">
    <property type="term" value="C:protein-containing complex"/>
    <property type="evidence" value="ECO:0007669"/>
    <property type="project" value="Ensembl"/>
</dbReference>
<dbReference type="GO" id="GO:0008013">
    <property type="term" value="F:beta-catenin binding"/>
    <property type="evidence" value="ECO:0000250"/>
    <property type="project" value="UniProtKB"/>
</dbReference>
<dbReference type="GO" id="GO:0061630">
    <property type="term" value="F:ubiquitin protein ligase activity"/>
    <property type="evidence" value="ECO:0000314"/>
    <property type="project" value="MGI"/>
</dbReference>
<dbReference type="GO" id="GO:0004842">
    <property type="term" value="F:ubiquitin-protein transferase activity"/>
    <property type="evidence" value="ECO:0000314"/>
    <property type="project" value="UniProtKB"/>
</dbReference>
<dbReference type="GO" id="GO:0008270">
    <property type="term" value="F:zinc ion binding"/>
    <property type="evidence" value="ECO:0007669"/>
    <property type="project" value="UniProtKB-KW"/>
</dbReference>
<dbReference type="GO" id="GO:0021904">
    <property type="term" value="P:dorsal/ventral neural tube patterning"/>
    <property type="evidence" value="ECO:0000315"/>
    <property type="project" value="MGI"/>
</dbReference>
<dbReference type="GO" id="GO:0003358">
    <property type="term" value="P:noradrenergic neuron development"/>
    <property type="evidence" value="ECO:0000315"/>
    <property type="project" value="MGI"/>
</dbReference>
<dbReference type="GO" id="GO:0090263">
    <property type="term" value="P:positive regulation of canonical Wnt signaling pathway"/>
    <property type="evidence" value="ECO:0000250"/>
    <property type="project" value="UniProtKB"/>
</dbReference>
<dbReference type="GO" id="GO:0051865">
    <property type="term" value="P:protein autoubiquitination"/>
    <property type="evidence" value="ECO:0000314"/>
    <property type="project" value="UniProtKB"/>
</dbReference>
<dbReference type="GO" id="GO:0006513">
    <property type="term" value="P:protein monoubiquitination"/>
    <property type="evidence" value="ECO:0000316"/>
    <property type="project" value="MGI"/>
</dbReference>
<dbReference type="GO" id="GO:0016567">
    <property type="term" value="P:protein ubiquitination"/>
    <property type="evidence" value="ECO:0000314"/>
    <property type="project" value="UniProtKB"/>
</dbReference>
<dbReference type="GO" id="GO:0099149">
    <property type="term" value="P:regulation of postsynaptic neurotransmitter receptor internalization"/>
    <property type="evidence" value="ECO:0000314"/>
    <property type="project" value="SynGO"/>
</dbReference>
<dbReference type="CDD" id="cd16563">
    <property type="entry name" value="RING-HC_RNF220"/>
    <property type="match status" value="1"/>
</dbReference>
<dbReference type="FunFam" id="3.30.40.10:FF:000195">
    <property type="entry name" value="E3 ubiquitin-protein ligase RNF220"/>
    <property type="match status" value="1"/>
</dbReference>
<dbReference type="Gene3D" id="3.30.40.10">
    <property type="entry name" value="Zinc/RING finger domain, C3HC4 (zinc finger)"/>
    <property type="match status" value="1"/>
</dbReference>
<dbReference type="InterPro" id="IPR052443">
    <property type="entry name" value="E3_ubiq-ligase_RNF220-like"/>
</dbReference>
<dbReference type="InterPro" id="IPR031824">
    <property type="entry name" value="RNF220_mid"/>
</dbReference>
<dbReference type="InterPro" id="IPR040178">
    <property type="entry name" value="RNF220_RING"/>
</dbReference>
<dbReference type="InterPro" id="IPR001841">
    <property type="entry name" value="Znf_RING"/>
</dbReference>
<dbReference type="InterPro" id="IPR013083">
    <property type="entry name" value="Znf_RING/FYVE/PHD"/>
</dbReference>
<dbReference type="PANTHER" id="PTHR13459:SF3">
    <property type="entry name" value="E3 UBIQUITIN-PROTEIN LIGASE RNF220"/>
    <property type="match status" value="1"/>
</dbReference>
<dbReference type="PANTHER" id="PTHR13459">
    <property type="entry name" value="E3 UBIQUITIN-PROTEIN LIGASE RNF220 ISOFORM X1"/>
    <property type="match status" value="1"/>
</dbReference>
<dbReference type="Pfam" id="PF15926">
    <property type="entry name" value="RNF220"/>
    <property type="match status" value="2"/>
</dbReference>
<dbReference type="Pfam" id="PF13923">
    <property type="entry name" value="zf-C3HC4_2"/>
    <property type="match status" value="1"/>
</dbReference>
<dbReference type="SUPFAM" id="SSF57850">
    <property type="entry name" value="RING/U-box"/>
    <property type="match status" value="1"/>
</dbReference>
<dbReference type="PROSITE" id="PS50089">
    <property type="entry name" value="ZF_RING_2"/>
    <property type="match status" value="1"/>
</dbReference>
<gene>
    <name type="primary">Rnf220</name>
</gene>
<name>RN220_MOUSE</name>
<reference key="1">
    <citation type="journal article" date="2005" name="Science">
        <title>The transcriptional landscape of the mammalian genome.</title>
        <authorList>
            <person name="Carninci P."/>
            <person name="Kasukawa T."/>
            <person name="Katayama S."/>
            <person name="Gough J."/>
            <person name="Frith M.C."/>
            <person name="Maeda N."/>
            <person name="Oyama R."/>
            <person name="Ravasi T."/>
            <person name="Lenhard B."/>
            <person name="Wells C."/>
            <person name="Kodzius R."/>
            <person name="Shimokawa K."/>
            <person name="Bajic V.B."/>
            <person name="Brenner S.E."/>
            <person name="Batalov S."/>
            <person name="Forrest A.R."/>
            <person name="Zavolan M."/>
            <person name="Davis M.J."/>
            <person name="Wilming L.G."/>
            <person name="Aidinis V."/>
            <person name="Allen J.E."/>
            <person name="Ambesi-Impiombato A."/>
            <person name="Apweiler R."/>
            <person name="Aturaliya R.N."/>
            <person name="Bailey T.L."/>
            <person name="Bansal M."/>
            <person name="Baxter L."/>
            <person name="Beisel K.W."/>
            <person name="Bersano T."/>
            <person name="Bono H."/>
            <person name="Chalk A.M."/>
            <person name="Chiu K.P."/>
            <person name="Choudhary V."/>
            <person name="Christoffels A."/>
            <person name="Clutterbuck D.R."/>
            <person name="Crowe M.L."/>
            <person name="Dalla E."/>
            <person name="Dalrymple B.P."/>
            <person name="de Bono B."/>
            <person name="Della Gatta G."/>
            <person name="di Bernardo D."/>
            <person name="Down T."/>
            <person name="Engstrom P."/>
            <person name="Fagiolini M."/>
            <person name="Faulkner G."/>
            <person name="Fletcher C.F."/>
            <person name="Fukushima T."/>
            <person name="Furuno M."/>
            <person name="Futaki S."/>
            <person name="Gariboldi M."/>
            <person name="Georgii-Hemming P."/>
            <person name="Gingeras T.R."/>
            <person name="Gojobori T."/>
            <person name="Green R.E."/>
            <person name="Gustincich S."/>
            <person name="Harbers M."/>
            <person name="Hayashi Y."/>
            <person name="Hensch T.K."/>
            <person name="Hirokawa N."/>
            <person name="Hill D."/>
            <person name="Huminiecki L."/>
            <person name="Iacono M."/>
            <person name="Ikeo K."/>
            <person name="Iwama A."/>
            <person name="Ishikawa T."/>
            <person name="Jakt M."/>
            <person name="Kanapin A."/>
            <person name="Katoh M."/>
            <person name="Kawasawa Y."/>
            <person name="Kelso J."/>
            <person name="Kitamura H."/>
            <person name="Kitano H."/>
            <person name="Kollias G."/>
            <person name="Krishnan S.P."/>
            <person name="Kruger A."/>
            <person name="Kummerfeld S.K."/>
            <person name="Kurochkin I.V."/>
            <person name="Lareau L.F."/>
            <person name="Lazarevic D."/>
            <person name="Lipovich L."/>
            <person name="Liu J."/>
            <person name="Liuni S."/>
            <person name="McWilliam S."/>
            <person name="Madan Babu M."/>
            <person name="Madera M."/>
            <person name="Marchionni L."/>
            <person name="Matsuda H."/>
            <person name="Matsuzawa S."/>
            <person name="Miki H."/>
            <person name="Mignone F."/>
            <person name="Miyake S."/>
            <person name="Morris K."/>
            <person name="Mottagui-Tabar S."/>
            <person name="Mulder N."/>
            <person name="Nakano N."/>
            <person name="Nakauchi H."/>
            <person name="Ng P."/>
            <person name="Nilsson R."/>
            <person name="Nishiguchi S."/>
            <person name="Nishikawa S."/>
            <person name="Nori F."/>
            <person name="Ohara O."/>
            <person name="Okazaki Y."/>
            <person name="Orlando V."/>
            <person name="Pang K.C."/>
            <person name="Pavan W.J."/>
            <person name="Pavesi G."/>
            <person name="Pesole G."/>
            <person name="Petrovsky N."/>
            <person name="Piazza S."/>
            <person name="Reed J."/>
            <person name="Reid J.F."/>
            <person name="Ring B.Z."/>
            <person name="Ringwald M."/>
            <person name="Rost B."/>
            <person name="Ruan Y."/>
            <person name="Salzberg S.L."/>
            <person name="Sandelin A."/>
            <person name="Schneider C."/>
            <person name="Schoenbach C."/>
            <person name="Sekiguchi K."/>
            <person name="Semple C.A."/>
            <person name="Seno S."/>
            <person name="Sessa L."/>
            <person name="Sheng Y."/>
            <person name="Shibata Y."/>
            <person name="Shimada H."/>
            <person name="Shimada K."/>
            <person name="Silva D."/>
            <person name="Sinclair B."/>
            <person name="Sperling S."/>
            <person name="Stupka E."/>
            <person name="Sugiura K."/>
            <person name="Sultana R."/>
            <person name="Takenaka Y."/>
            <person name="Taki K."/>
            <person name="Tammoja K."/>
            <person name="Tan S.L."/>
            <person name="Tang S."/>
            <person name="Taylor M.S."/>
            <person name="Tegner J."/>
            <person name="Teichmann S.A."/>
            <person name="Ueda H.R."/>
            <person name="van Nimwegen E."/>
            <person name="Verardo R."/>
            <person name="Wei C.L."/>
            <person name="Yagi K."/>
            <person name="Yamanishi H."/>
            <person name="Zabarovsky E."/>
            <person name="Zhu S."/>
            <person name="Zimmer A."/>
            <person name="Hide W."/>
            <person name="Bult C."/>
            <person name="Grimmond S.M."/>
            <person name="Teasdale R.D."/>
            <person name="Liu E.T."/>
            <person name="Brusic V."/>
            <person name="Quackenbush J."/>
            <person name="Wahlestedt C."/>
            <person name="Mattick J.S."/>
            <person name="Hume D.A."/>
            <person name="Kai C."/>
            <person name="Sasaki D."/>
            <person name="Tomaru Y."/>
            <person name="Fukuda S."/>
            <person name="Kanamori-Katayama M."/>
            <person name="Suzuki M."/>
            <person name="Aoki J."/>
            <person name="Arakawa T."/>
            <person name="Iida J."/>
            <person name="Imamura K."/>
            <person name="Itoh M."/>
            <person name="Kato T."/>
            <person name="Kawaji H."/>
            <person name="Kawagashira N."/>
            <person name="Kawashima T."/>
            <person name="Kojima M."/>
            <person name="Kondo S."/>
            <person name="Konno H."/>
            <person name="Nakano K."/>
            <person name="Ninomiya N."/>
            <person name="Nishio T."/>
            <person name="Okada M."/>
            <person name="Plessy C."/>
            <person name="Shibata K."/>
            <person name="Shiraki T."/>
            <person name="Suzuki S."/>
            <person name="Tagami M."/>
            <person name="Waki K."/>
            <person name="Watahiki A."/>
            <person name="Okamura-Oho Y."/>
            <person name="Suzuki H."/>
            <person name="Kawai J."/>
            <person name="Hayashizaki Y."/>
        </authorList>
    </citation>
    <scope>NUCLEOTIDE SEQUENCE [LARGE SCALE MRNA] (ISOFORMS 2 AND 3)</scope>
    <source>
        <strain>C57BL/6J</strain>
        <strain>NOD</strain>
        <tissue>Spleen</tissue>
        <tissue>Thymus</tissue>
    </source>
</reference>
<reference key="2">
    <citation type="journal article" date="2009" name="PLoS Biol.">
        <title>Lineage-specific biology revealed by a finished genome assembly of the mouse.</title>
        <authorList>
            <person name="Church D.M."/>
            <person name="Goodstadt L."/>
            <person name="Hillier L.W."/>
            <person name="Zody M.C."/>
            <person name="Goldstein S."/>
            <person name="She X."/>
            <person name="Bult C.J."/>
            <person name="Agarwala R."/>
            <person name="Cherry J.L."/>
            <person name="DiCuccio M."/>
            <person name="Hlavina W."/>
            <person name="Kapustin Y."/>
            <person name="Meric P."/>
            <person name="Maglott D."/>
            <person name="Birtle Z."/>
            <person name="Marques A.C."/>
            <person name="Graves T."/>
            <person name="Zhou S."/>
            <person name="Teague B."/>
            <person name="Potamousis K."/>
            <person name="Churas C."/>
            <person name="Place M."/>
            <person name="Herschleb J."/>
            <person name="Runnheim R."/>
            <person name="Forrest D."/>
            <person name="Amos-Landgraf J."/>
            <person name="Schwartz D.C."/>
            <person name="Cheng Z."/>
            <person name="Lindblad-Toh K."/>
            <person name="Eichler E.E."/>
            <person name="Ponting C.P."/>
        </authorList>
    </citation>
    <scope>NUCLEOTIDE SEQUENCE [LARGE SCALE GENOMIC DNA]</scope>
    <source>
        <strain>C57BL/6J</strain>
    </source>
</reference>
<reference key="3">
    <citation type="journal article" date="2004" name="Genome Res.">
        <title>The status, quality, and expansion of the NIH full-length cDNA project: the Mammalian Gene Collection (MGC).</title>
        <authorList>
            <consortium name="The MGC Project Team"/>
        </authorList>
    </citation>
    <scope>NUCLEOTIDE SEQUENCE [LARGE SCALE MRNA] (ISOFORMS 1 AND 4)</scope>
    <source>
        <strain>C57BL/6J</strain>
        <tissue>Brain</tissue>
        <tissue>Mammary gland</tissue>
    </source>
</reference>
<reference key="4">
    <citation type="journal article" date="2010" name="Biochem. Biophys. Res. Commun.">
        <title>RNF220, an E3 ubiquitin ligase that targets Sin3B for ubiquitination.</title>
        <authorList>
            <person name="Kong Q."/>
            <person name="Zeng W."/>
            <person name="Wu J."/>
            <person name="Hu W."/>
            <person name="Li C."/>
            <person name="Mao B."/>
        </authorList>
    </citation>
    <scope>FUNCTION</scope>
    <scope>SUBCELLULAR LOCATION</scope>
    <scope>INTERACTION WITH SIN3B</scope>
</reference>
<reference key="5">
    <citation type="journal article" date="2010" name="Cell">
        <title>A tissue-specific atlas of mouse protein phosphorylation and expression.</title>
        <authorList>
            <person name="Huttlin E.L."/>
            <person name="Jedrychowski M.P."/>
            <person name="Elias J.E."/>
            <person name="Goswami T."/>
            <person name="Rad R."/>
            <person name="Beausoleil S.A."/>
            <person name="Villen J."/>
            <person name="Haas W."/>
            <person name="Sowa M.E."/>
            <person name="Gygi S.P."/>
        </authorList>
    </citation>
    <scope>PHOSPHORYLATION [LARGE SCALE ANALYSIS] AT SER-390</scope>
    <scope>IDENTIFICATION BY MASS SPECTROMETRY [LARGE SCALE ANALYSIS]</scope>
    <source>
        <tissue>Brain</tissue>
        <tissue>Kidney</tissue>
        <tissue>Spleen</tissue>
        <tissue>Testis</tissue>
    </source>
</reference>
<reference key="6">
    <citation type="journal article" date="2021" name="Brain">
        <title>Biallelic mutations in RNF220 cause laminopathies featuring leukodystrophy, ataxia and deafness.</title>
        <authorList>
            <person name="Sferra A."/>
            <person name="Fortugno P."/>
            <person name="Motta M."/>
            <person name="Aiello C."/>
            <person name="Petrini S."/>
            <person name="Ciolfi A."/>
            <person name="Cipressa F."/>
            <person name="Moroni I."/>
            <person name="Leuzzi V."/>
            <person name="Pieroni L."/>
            <person name="Marini F."/>
            <person name="Boespflug Tanguy O."/>
            <person name="Eymard-Pierre E."/>
            <person name="Danti F.R."/>
            <person name="Compagnucci C."/>
            <person name="Zambruno G."/>
            <person name="Brusco A."/>
            <person name="Santorelli F.M."/>
            <person name="Chiapparini L."/>
            <person name="Francalanci P."/>
            <person name="Loizzo A.L."/>
            <person name="Tartaglia M."/>
            <person name="Cestra G."/>
            <person name="Bertini E."/>
        </authorList>
    </citation>
    <scope>TISSUE SPECIFICITY</scope>
</reference>
<keyword id="KW-0025">Alternative splicing</keyword>
<keyword id="KW-0175">Coiled coil</keyword>
<keyword id="KW-0963">Cytoplasm</keyword>
<keyword id="KW-1017">Isopeptide bond</keyword>
<keyword id="KW-0479">Metal-binding</keyword>
<keyword id="KW-0539">Nucleus</keyword>
<keyword id="KW-0597">Phosphoprotein</keyword>
<keyword id="KW-1185">Reference proteome</keyword>
<keyword id="KW-0808">Transferase</keyword>
<keyword id="KW-0832">Ubl conjugation</keyword>
<keyword id="KW-0833">Ubl conjugation pathway</keyword>
<keyword id="KW-0862">Zinc</keyword>
<keyword id="KW-0863">Zinc-finger</keyword>
<feature type="chain" id="PRO_0000277659" description="E3 ubiquitin-protein ligase Rnf220">
    <location>
        <begin position="1"/>
        <end position="566"/>
    </location>
</feature>
<feature type="zinc finger region" description="RING-type" evidence="4">
    <location>
        <begin position="514"/>
        <end position="553"/>
    </location>
</feature>
<feature type="region of interest" description="Disordered" evidence="5">
    <location>
        <begin position="277"/>
        <end position="300"/>
    </location>
</feature>
<feature type="region of interest" description="Required for targeting to the cytoplasm">
    <location>
        <begin position="514"/>
        <end position="522"/>
    </location>
</feature>
<feature type="coiled-coil region" evidence="3">
    <location>
        <begin position="485"/>
        <end position="513"/>
    </location>
</feature>
<feature type="compositionally biased region" description="Basic and acidic residues" evidence="5">
    <location>
        <begin position="291"/>
        <end position="300"/>
    </location>
</feature>
<feature type="modified residue" description="Phosphoserine" evidence="11">
    <location>
        <position position="390"/>
    </location>
</feature>
<feature type="cross-link" description="Glycyl lysine isopeptide (Lys-Gly) (interchain with G-Cter in SUMO2)" evidence="2">
    <location>
        <position position="277"/>
    </location>
</feature>
<feature type="splice variant" id="VSP_023068" description="In isoform 4." evidence="8">
    <location>
        <begin position="1"/>
        <end position="321"/>
    </location>
</feature>
<feature type="splice variant" id="VSP_023069" description="In isoform 2." evidence="9">
    <location>
        <begin position="1"/>
        <end position="284"/>
    </location>
</feature>
<feature type="splice variant" id="VSP_023070" description="In isoform 3." evidence="9">
    <original>KKAVALFDSQAPLCPICQVLLRPSELQEH</original>
    <variation>YFGWNPLLTPSKPASQKCSTGWQHRTCSQ</variation>
    <location>
        <begin position="211"/>
        <end position="239"/>
    </location>
</feature>
<feature type="splice variant" id="VSP_023071" description="In isoform 3." evidence="9">
    <location>
        <begin position="240"/>
        <end position="566"/>
    </location>
</feature>
<feature type="splice variant" id="VSP_023072" description="In isoform 2." evidence="9">
    <original>ASPHSSATEDLHHSDRYQ</original>
    <variation>MPRARSGRRSRGADGREE</variation>
    <location>
        <begin position="285"/>
        <end position="302"/>
    </location>
</feature>
<feature type="splice variant" id="VSP_023073" description="In isoform 2." evidence="9">
    <original>Q</original>
    <variation>QVCPLCSRPLAGSEQEMSRHVEHCLAK</variation>
    <location>
        <position position="331"/>
    </location>
</feature>
<feature type="sequence conflict" description="In Ref. 3; AAH34875." evidence="10" ref="3">
    <original>N</original>
    <variation>S</variation>
    <location>
        <position position="553"/>
    </location>
</feature>
<sequence>MDLHRAAFKMENSSYLPNPLASPALMVLASTAEASRDASIPCQQPRPFGVPVSVDKDVHIPFTNGSYTFASMYHRQGGVPGTFANRDFPPSLLHLHPQFAPPNLDCTPISMLNHSGVGAFRPFASTEDRESYQSAFTPAKRLKNCHDTESPHLRFSDADGKEYDFGTQLPSSSPGSLKVDDTGKKIFAVSGLISDRETSSSPEDRNDRCKKKAVALFDSQAPLCPICQVLLRPSELQEHMEQELEQLAQLPASKNSLLKDAMAPGTPKSLLLSASIKREGDSPTASPHSSATEDLHHSDRYQTFLRVRANRQTRLNARIGKMKRRKQDEGQREGSCMAEDDAVDIEHADSNRFEEYEWCGQKRIRATTLLEGGFRGSGFVMCSGKENPDSDADLDVDGDDTLEYGKPQYTEADVIPCTGEEPGEAKEREALRGAVLNGGPPSTRITPEFSKWASDEMPSTSNGEGSKQEAMQKTCKNSDIEKITEESAVTTFEALKARVRELERQLSRGDRYKCLICMDSYSMPLTSIQCWHVHCEECWLRTLGAKKLCPQCNTITAPGDLRRIYL</sequence>
<organism>
    <name type="scientific">Mus musculus</name>
    <name type="common">Mouse</name>
    <dbReference type="NCBI Taxonomy" id="10090"/>
    <lineage>
        <taxon>Eukaryota</taxon>
        <taxon>Metazoa</taxon>
        <taxon>Chordata</taxon>
        <taxon>Craniata</taxon>
        <taxon>Vertebrata</taxon>
        <taxon>Euteleostomi</taxon>
        <taxon>Mammalia</taxon>
        <taxon>Eutheria</taxon>
        <taxon>Euarchontoglires</taxon>
        <taxon>Glires</taxon>
        <taxon>Rodentia</taxon>
        <taxon>Myomorpha</taxon>
        <taxon>Muroidea</taxon>
        <taxon>Muridae</taxon>
        <taxon>Murinae</taxon>
        <taxon>Mus</taxon>
        <taxon>Mus</taxon>
    </lineage>
</organism>